<accession>P60107</accession>
<accession>Q99U81</accession>
<sequence>MTENKSFKESHPLDDFISDKELSNTTIQKEKLTIEQQKQVDTISKQINPLDNEGLLAFGSDLQKQMSQFSHQMLDEVQSKDVGPIGDTLSDLMSKLKSVNPNELNTDKPSMLKRIFSRAKSSINEIFSRMQSVSAQVDRITIQLQKHQTHLTRDIELLDTLYDKNKQYFDDLSLHIIAAQQKKLQLENEKLPQLQQQAQQSTNQMDIQQVSDMQQFIDRLDKRIYDLQLSRQIALQTAPQIRMIQNVNQALAEKIQSSILTSIPLWKNQMAIALTLMRQRNAVAAQRAVTDTTNDLLTANAEMLKQNAIETATENERGIVDLDTLKRTQRNIIETIEETLIIQQHGREERQLAEKELQQLEQDLKSHLVNIKGPNKQS</sequence>
<feature type="chain" id="PRO_0000172803" description="TelA-like protein SAV1406">
    <location>
        <begin position="1"/>
        <end position="378"/>
    </location>
</feature>
<gene>
    <name type="ordered locus">SAV1406</name>
</gene>
<organism>
    <name type="scientific">Staphylococcus aureus (strain Mu50 / ATCC 700699)</name>
    <dbReference type="NCBI Taxonomy" id="158878"/>
    <lineage>
        <taxon>Bacteria</taxon>
        <taxon>Bacillati</taxon>
        <taxon>Bacillota</taxon>
        <taxon>Bacilli</taxon>
        <taxon>Bacillales</taxon>
        <taxon>Staphylococcaceae</taxon>
        <taxon>Staphylococcus</taxon>
    </lineage>
</organism>
<reference key="1">
    <citation type="journal article" date="2001" name="Lancet">
        <title>Whole genome sequencing of meticillin-resistant Staphylococcus aureus.</title>
        <authorList>
            <person name="Kuroda M."/>
            <person name="Ohta T."/>
            <person name="Uchiyama I."/>
            <person name="Baba T."/>
            <person name="Yuzawa H."/>
            <person name="Kobayashi I."/>
            <person name="Cui L."/>
            <person name="Oguchi A."/>
            <person name="Aoki K."/>
            <person name="Nagai Y."/>
            <person name="Lian J.-Q."/>
            <person name="Ito T."/>
            <person name="Kanamori M."/>
            <person name="Matsumaru H."/>
            <person name="Maruyama A."/>
            <person name="Murakami H."/>
            <person name="Hosoyama A."/>
            <person name="Mizutani-Ui Y."/>
            <person name="Takahashi N.K."/>
            <person name="Sawano T."/>
            <person name="Inoue R."/>
            <person name="Kaito C."/>
            <person name="Sekimizu K."/>
            <person name="Hirakawa H."/>
            <person name="Kuhara S."/>
            <person name="Goto S."/>
            <person name="Yabuzaki J."/>
            <person name="Kanehisa M."/>
            <person name="Yamashita A."/>
            <person name="Oshima K."/>
            <person name="Furuya K."/>
            <person name="Yoshino C."/>
            <person name="Shiba T."/>
            <person name="Hattori M."/>
            <person name="Ogasawara N."/>
            <person name="Hayashi H."/>
            <person name="Hiramatsu K."/>
        </authorList>
    </citation>
    <scope>NUCLEOTIDE SEQUENCE [LARGE SCALE GENOMIC DNA]</scope>
    <source>
        <strain>Mu50 / ATCC 700699</strain>
    </source>
</reference>
<dbReference type="EMBL" id="BA000017">
    <property type="protein sequence ID" value="BAB57568.1"/>
    <property type="molecule type" value="Genomic_DNA"/>
</dbReference>
<dbReference type="RefSeq" id="WP_000138415.1">
    <property type="nucleotide sequence ID" value="NC_002758.2"/>
</dbReference>
<dbReference type="SMR" id="P60107"/>
<dbReference type="KEGG" id="sav:SAV1406"/>
<dbReference type="HOGENOM" id="CLU_032111_0_0_9"/>
<dbReference type="PhylomeDB" id="P60107"/>
<dbReference type="Proteomes" id="UP000002481">
    <property type="component" value="Chromosome"/>
</dbReference>
<dbReference type="InterPro" id="IPR008863">
    <property type="entry name" value="Toxic_anion-R_TelA"/>
</dbReference>
<dbReference type="PANTHER" id="PTHR38432">
    <property type="entry name" value="TELA-LIKE PROTEIN SAOUHSC_01408"/>
    <property type="match status" value="1"/>
</dbReference>
<dbReference type="PANTHER" id="PTHR38432:SF1">
    <property type="entry name" value="TELA-LIKE PROTEIN SAOUHSC_01408"/>
    <property type="match status" value="1"/>
</dbReference>
<dbReference type="Pfam" id="PF05816">
    <property type="entry name" value="TelA"/>
    <property type="match status" value="1"/>
</dbReference>
<dbReference type="PIRSF" id="PIRSF026508">
    <property type="entry name" value="TelA"/>
    <property type="match status" value="1"/>
</dbReference>
<proteinExistence type="inferred from homology"/>
<evidence type="ECO:0000305" key="1"/>
<name>TELL_STAAM</name>
<protein>
    <recommendedName>
        <fullName>TelA-like protein SAV1406</fullName>
    </recommendedName>
</protein>
<comment type="similarity">
    <text evidence="1">Belongs to the TelA family.</text>
</comment>